<gene>
    <name evidence="1" type="primary">tsaD</name>
    <name type="synonym">gcp</name>
    <name type="ordered locus">TDE_2504</name>
</gene>
<sequence length="338" mass="36564">MKILGIESSCDETAAAVVEDGNKILSNIVATQIPFHKMYNGVVPEIASRKHTEWILPVVKQALAEAGLSLKEIDGIAATGRPGLMGSLLVGLTFAKTLAWSSNKPFIAVNHMLGHLYASHLENDIPYPYLGLLVSGGHSIICKVNNFDDIEVLGTTIDDAPGEAFDKVAKFYNLGYPGGAVIDKLAKSGNPKAANFPMPIIHKEGHKYDVSYSGLKTAVINQIDQFWNKDFEKTPENIAAAFQTRAVKILLRPLLDASIDTGLKTIVAGGGVAANSLLREKLAEHKELKCIFPSLKFCTDNAAMIAGLGYHYLKRGDRTPFTVEASARVEGFSKKGRQ</sequence>
<accession>Q73JV7</accession>
<proteinExistence type="inferred from homology"/>
<comment type="function">
    <text evidence="1">Required for the formation of a threonylcarbamoyl group on adenosine at position 37 (t(6)A37) in tRNAs that read codons beginning with adenine. Is involved in the transfer of the threonylcarbamoyl moiety of threonylcarbamoyl-AMP (TC-AMP) to the N6 group of A37, together with TsaE and TsaB. TsaD likely plays a direct catalytic role in this reaction.</text>
</comment>
<comment type="catalytic activity">
    <reaction evidence="1">
        <text>L-threonylcarbamoyladenylate + adenosine(37) in tRNA = N(6)-L-threonylcarbamoyladenosine(37) in tRNA + AMP + H(+)</text>
        <dbReference type="Rhea" id="RHEA:37059"/>
        <dbReference type="Rhea" id="RHEA-COMP:10162"/>
        <dbReference type="Rhea" id="RHEA-COMP:10163"/>
        <dbReference type="ChEBI" id="CHEBI:15378"/>
        <dbReference type="ChEBI" id="CHEBI:73682"/>
        <dbReference type="ChEBI" id="CHEBI:74411"/>
        <dbReference type="ChEBI" id="CHEBI:74418"/>
        <dbReference type="ChEBI" id="CHEBI:456215"/>
        <dbReference type="EC" id="2.3.1.234"/>
    </reaction>
</comment>
<comment type="cofactor">
    <cofactor evidence="1">
        <name>Fe(2+)</name>
        <dbReference type="ChEBI" id="CHEBI:29033"/>
    </cofactor>
    <text evidence="1">Binds 1 Fe(2+) ion per subunit.</text>
</comment>
<comment type="subcellular location">
    <subcellularLocation>
        <location evidence="1">Cytoplasm</location>
    </subcellularLocation>
</comment>
<comment type="similarity">
    <text evidence="1">Belongs to the KAE1 / TsaD family.</text>
</comment>
<keyword id="KW-0012">Acyltransferase</keyword>
<keyword id="KW-0963">Cytoplasm</keyword>
<keyword id="KW-0408">Iron</keyword>
<keyword id="KW-0479">Metal-binding</keyword>
<keyword id="KW-1185">Reference proteome</keyword>
<keyword id="KW-0808">Transferase</keyword>
<keyword id="KW-0819">tRNA processing</keyword>
<organism>
    <name type="scientific">Treponema denticola (strain ATCC 35405 / DSM 14222 / CIP 103919 / JCM 8153 / KCTC 15104)</name>
    <dbReference type="NCBI Taxonomy" id="243275"/>
    <lineage>
        <taxon>Bacteria</taxon>
        <taxon>Pseudomonadati</taxon>
        <taxon>Spirochaetota</taxon>
        <taxon>Spirochaetia</taxon>
        <taxon>Spirochaetales</taxon>
        <taxon>Treponemataceae</taxon>
        <taxon>Treponema</taxon>
    </lineage>
</organism>
<protein>
    <recommendedName>
        <fullName evidence="1">tRNA N6-adenosine threonylcarbamoyltransferase</fullName>
        <ecNumber evidence="1">2.3.1.234</ecNumber>
    </recommendedName>
    <alternativeName>
        <fullName evidence="1">N6-L-threonylcarbamoyladenine synthase</fullName>
        <shortName evidence="1">t(6)A synthase</shortName>
    </alternativeName>
    <alternativeName>
        <fullName evidence="1">t(6)A37 threonylcarbamoyladenosine biosynthesis protein TsaD</fullName>
    </alternativeName>
    <alternativeName>
        <fullName evidence="1">tRNA threonylcarbamoyladenosine biosynthesis protein TsaD</fullName>
    </alternativeName>
</protein>
<reference key="1">
    <citation type="journal article" date="2004" name="Proc. Natl. Acad. Sci. U.S.A.">
        <title>Comparison of the genome of the oral pathogen Treponema denticola with other spirochete genomes.</title>
        <authorList>
            <person name="Seshadri R."/>
            <person name="Myers G.S.A."/>
            <person name="Tettelin H."/>
            <person name="Eisen J.A."/>
            <person name="Heidelberg J.F."/>
            <person name="Dodson R.J."/>
            <person name="Davidsen T.M."/>
            <person name="DeBoy R.T."/>
            <person name="Fouts D.E."/>
            <person name="Haft D.H."/>
            <person name="Selengut J."/>
            <person name="Ren Q."/>
            <person name="Brinkac L.M."/>
            <person name="Madupu R."/>
            <person name="Kolonay J.F."/>
            <person name="Durkin S.A."/>
            <person name="Daugherty S.C."/>
            <person name="Shetty J."/>
            <person name="Shvartsbeyn A."/>
            <person name="Gebregeorgis E."/>
            <person name="Geer K."/>
            <person name="Tsegaye G."/>
            <person name="Malek J.A."/>
            <person name="Ayodeji B."/>
            <person name="Shatsman S."/>
            <person name="McLeod M.P."/>
            <person name="Smajs D."/>
            <person name="Howell J.K."/>
            <person name="Pal S."/>
            <person name="Amin A."/>
            <person name="Vashisth P."/>
            <person name="McNeill T.Z."/>
            <person name="Xiang Q."/>
            <person name="Sodergren E."/>
            <person name="Baca E."/>
            <person name="Weinstock G.M."/>
            <person name="Norris S.J."/>
            <person name="Fraser C.M."/>
            <person name="Paulsen I.T."/>
        </authorList>
    </citation>
    <scope>NUCLEOTIDE SEQUENCE [LARGE SCALE GENOMIC DNA]</scope>
    <source>
        <strain>ATCC 35405 / DSM 14222 / CIP 103919 / JCM 8153 / KCTC 15104</strain>
    </source>
</reference>
<feature type="chain" id="PRO_0000303601" description="tRNA N6-adenosine threonylcarbamoyltransferase">
    <location>
        <begin position="1"/>
        <end position="338"/>
    </location>
</feature>
<feature type="binding site" evidence="1">
    <location>
        <position position="111"/>
    </location>
    <ligand>
        <name>Fe cation</name>
        <dbReference type="ChEBI" id="CHEBI:24875"/>
    </ligand>
</feature>
<feature type="binding site" evidence="1">
    <location>
        <position position="115"/>
    </location>
    <ligand>
        <name>Fe cation</name>
        <dbReference type="ChEBI" id="CHEBI:24875"/>
    </ligand>
</feature>
<feature type="binding site" evidence="1">
    <location>
        <begin position="133"/>
        <end position="137"/>
    </location>
    <ligand>
        <name>substrate</name>
    </ligand>
</feature>
<feature type="binding site" evidence="1">
    <location>
        <position position="166"/>
    </location>
    <ligand>
        <name>substrate</name>
    </ligand>
</feature>
<feature type="binding site" evidence="1">
    <location>
        <position position="179"/>
    </location>
    <ligand>
        <name>substrate</name>
    </ligand>
</feature>
<feature type="binding site" evidence="1">
    <location>
        <position position="183"/>
    </location>
    <ligand>
        <name>substrate</name>
    </ligand>
</feature>
<feature type="binding site" evidence="1">
    <location>
        <position position="275"/>
    </location>
    <ligand>
        <name>substrate</name>
    </ligand>
</feature>
<feature type="binding site" evidence="1">
    <location>
        <position position="300"/>
    </location>
    <ligand>
        <name>Fe cation</name>
        <dbReference type="ChEBI" id="CHEBI:24875"/>
    </ligand>
</feature>
<name>TSAD_TREDE</name>
<dbReference type="EC" id="2.3.1.234" evidence="1"/>
<dbReference type="EMBL" id="AE017226">
    <property type="protein sequence ID" value="AAS13021.1"/>
    <property type="molecule type" value="Genomic_DNA"/>
</dbReference>
<dbReference type="RefSeq" id="NP_973102.1">
    <property type="nucleotide sequence ID" value="NC_002967.9"/>
</dbReference>
<dbReference type="RefSeq" id="WP_002680472.1">
    <property type="nucleotide sequence ID" value="NC_002967.9"/>
</dbReference>
<dbReference type="SMR" id="Q73JV7"/>
<dbReference type="STRING" id="243275.TDE_2504"/>
<dbReference type="PaxDb" id="243275-TDE_2504"/>
<dbReference type="GeneID" id="2741477"/>
<dbReference type="KEGG" id="tde:TDE_2504"/>
<dbReference type="PATRIC" id="fig|243275.7.peg.2371"/>
<dbReference type="eggNOG" id="COG0533">
    <property type="taxonomic scope" value="Bacteria"/>
</dbReference>
<dbReference type="HOGENOM" id="CLU_023208_0_2_12"/>
<dbReference type="OrthoDB" id="9806197at2"/>
<dbReference type="Proteomes" id="UP000008212">
    <property type="component" value="Chromosome"/>
</dbReference>
<dbReference type="GO" id="GO:0005737">
    <property type="term" value="C:cytoplasm"/>
    <property type="evidence" value="ECO:0007669"/>
    <property type="project" value="UniProtKB-SubCell"/>
</dbReference>
<dbReference type="GO" id="GO:0005506">
    <property type="term" value="F:iron ion binding"/>
    <property type="evidence" value="ECO:0007669"/>
    <property type="project" value="UniProtKB-UniRule"/>
</dbReference>
<dbReference type="GO" id="GO:0061711">
    <property type="term" value="F:N(6)-L-threonylcarbamoyladenine synthase activity"/>
    <property type="evidence" value="ECO:0007669"/>
    <property type="project" value="UniProtKB-EC"/>
</dbReference>
<dbReference type="GO" id="GO:0002949">
    <property type="term" value="P:tRNA threonylcarbamoyladenosine modification"/>
    <property type="evidence" value="ECO:0007669"/>
    <property type="project" value="UniProtKB-UniRule"/>
</dbReference>
<dbReference type="CDD" id="cd24133">
    <property type="entry name" value="ASKHA_NBD_TsaD_bac"/>
    <property type="match status" value="1"/>
</dbReference>
<dbReference type="FunFam" id="3.30.420.40:FF:000012">
    <property type="entry name" value="tRNA N6-adenosine threonylcarbamoyltransferase"/>
    <property type="match status" value="1"/>
</dbReference>
<dbReference type="Gene3D" id="3.30.420.40">
    <property type="match status" value="2"/>
</dbReference>
<dbReference type="HAMAP" id="MF_01445">
    <property type="entry name" value="TsaD"/>
    <property type="match status" value="1"/>
</dbReference>
<dbReference type="InterPro" id="IPR043129">
    <property type="entry name" value="ATPase_NBD"/>
</dbReference>
<dbReference type="InterPro" id="IPR000905">
    <property type="entry name" value="Gcp-like_dom"/>
</dbReference>
<dbReference type="InterPro" id="IPR017861">
    <property type="entry name" value="KAE1/TsaD"/>
</dbReference>
<dbReference type="InterPro" id="IPR022450">
    <property type="entry name" value="TsaD"/>
</dbReference>
<dbReference type="NCBIfam" id="TIGR00329">
    <property type="entry name" value="gcp_kae1"/>
    <property type="match status" value="1"/>
</dbReference>
<dbReference type="NCBIfam" id="TIGR03723">
    <property type="entry name" value="T6A_TsaD_YgjD"/>
    <property type="match status" value="1"/>
</dbReference>
<dbReference type="PANTHER" id="PTHR11735">
    <property type="entry name" value="TRNA N6-ADENOSINE THREONYLCARBAMOYLTRANSFERASE"/>
    <property type="match status" value="1"/>
</dbReference>
<dbReference type="PANTHER" id="PTHR11735:SF6">
    <property type="entry name" value="TRNA N6-ADENOSINE THREONYLCARBAMOYLTRANSFERASE, MITOCHONDRIAL"/>
    <property type="match status" value="1"/>
</dbReference>
<dbReference type="Pfam" id="PF00814">
    <property type="entry name" value="TsaD"/>
    <property type="match status" value="1"/>
</dbReference>
<dbReference type="PRINTS" id="PR00789">
    <property type="entry name" value="OSIALOPTASE"/>
</dbReference>
<dbReference type="SUPFAM" id="SSF53067">
    <property type="entry name" value="Actin-like ATPase domain"/>
    <property type="match status" value="1"/>
</dbReference>
<evidence type="ECO:0000255" key="1">
    <source>
        <dbReference type="HAMAP-Rule" id="MF_01445"/>
    </source>
</evidence>